<geneLocation type="chloroplast"/>
<proteinExistence type="inferred from homology"/>
<comment type="function">
    <text evidence="2">Photosystem II (PSII) is a light-driven water:plastoquinone oxidoreductase that uses light energy to abstract electrons from H(2)O, generating O(2) and a proton gradient subsequently used for ATP formation. It consists of a core antenna complex that captures photons, and an electron transfer chain that converts photonic excitation into a charge separation. The D1/D2 (PsbA/PsbD) reaction center heterodimer binds P680, the primary electron donor of PSII as well as several subsequent electron acceptors.</text>
</comment>
<comment type="catalytic activity">
    <reaction evidence="2">
        <text>2 a plastoquinone + 4 hnu + 2 H2O = 2 a plastoquinol + O2</text>
        <dbReference type="Rhea" id="RHEA:36359"/>
        <dbReference type="Rhea" id="RHEA-COMP:9561"/>
        <dbReference type="Rhea" id="RHEA-COMP:9562"/>
        <dbReference type="ChEBI" id="CHEBI:15377"/>
        <dbReference type="ChEBI" id="CHEBI:15379"/>
        <dbReference type="ChEBI" id="CHEBI:17757"/>
        <dbReference type="ChEBI" id="CHEBI:30212"/>
        <dbReference type="ChEBI" id="CHEBI:62192"/>
        <dbReference type="EC" id="1.10.3.9"/>
    </reaction>
</comment>
<comment type="cofactor">
    <text evidence="2">The D1/D2 heterodimer binds P680, chlorophylls that are the primary electron donor of PSII, and subsequent electron acceptors. It shares a non-heme iron and each subunit binds pheophytin, quinone, additional chlorophylls, carotenoids and lipids. D1 provides most of the ligands for the Mn4-Ca-O5 cluster of the oxygen-evolving complex (OEC). There is also a Cl(-1) ion associated with D1 and D2, which is required for oxygen evolution. The PSII complex binds additional chlorophylls, carotenoids and specific lipids.</text>
</comment>
<comment type="subunit">
    <text evidence="2">PSII is composed of 1 copy each of membrane proteins PsbA, PsbB, PsbC, PsbD, PsbE, PsbF, PsbH, PsbI, PsbJ, PsbK, PsbL, PsbM, PsbT, PsbX, PsbY, PsbZ, Psb30/Ycf12, at least 3 peripheral proteins of the oxygen-evolving complex and a large number of cofactors. It forms dimeric complexes.</text>
</comment>
<comment type="subcellular location">
    <subcellularLocation>
        <location evidence="2">Plastid</location>
        <location evidence="2">Chloroplast thylakoid membrane</location>
        <topology evidence="2">Multi-pass membrane protein</topology>
    </subcellularLocation>
</comment>
<comment type="PTM">
    <text evidence="2">Tyr-161 forms a radical intermediate that is referred to as redox-active TyrZ, YZ or Y-Z.</text>
</comment>
<comment type="PTM">
    <text evidence="2">C-terminally processed by CTPA; processing is essential to allow assembly of the oxygen-evolving complex and thus photosynthetic growth.</text>
</comment>
<comment type="miscellaneous">
    <text evidence="2">2 of the reaction center chlorophylls (ChlD1 and ChlD2) are entirely coordinated by water.</text>
</comment>
<comment type="miscellaneous">
    <text evidence="2">Herbicides such as atrazine, BNT, diuron or ioxynil bind in the Q(B) binding site and block subsequent electron transfer.</text>
</comment>
<comment type="similarity">
    <text evidence="2">Belongs to the reaction center PufL/M/PsbA/D family.</text>
</comment>
<organism>
    <name type="scientific">Brassica napus</name>
    <name type="common">Rape</name>
    <dbReference type="NCBI Taxonomy" id="3708"/>
    <lineage>
        <taxon>Eukaryota</taxon>
        <taxon>Viridiplantae</taxon>
        <taxon>Streptophyta</taxon>
        <taxon>Embryophyta</taxon>
        <taxon>Tracheophyta</taxon>
        <taxon>Spermatophyta</taxon>
        <taxon>Magnoliopsida</taxon>
        <taxon>eudicotyledons</taxon>
        <taxon>Gunneridae</taxon>
        <taxon>Pentapetalae</taxon>
        <taxon>rosids</taxon>
        <taxon>malvids</taxon>
        <taxon>Brassicales</taxon>
        <taxon>Brassicaceae</taxon>
        <taxon>Brassiceae</taxon>
        <taxon>Brassica</taxon>
    </lineage>
</organism>
<protein>
    <recommendedName>
        <fullName evidence="2">Photosystem II protein D1</fullName>
        <shortName evidence="2">PSII D1 protein</shortName>
        <ecNumber evidence="2">1.10.3.9</ecNumber>
    </recommendedName>
    <alternativeName>
        <fullName evidence="2">Photosystem II Q(B) protein</fullName>
    </alternativeName>
</protein>
<reference key="1">
    <citation type="journal article" date="1987" name="Theor. Appl. Genet.">
        <title>Nucleotide sequence of the chloroplast gene responsible for triazine resistance in canola.</title>
        <authorList>
            <person name="Reith M."/>
            <person name="Straus N.A."/>
        </authorList>
        <dbReference type="AGRICOLA" id="IND87017393"/>
    </citation>
    <scope>NUCLEOTIDE SEQUENCE [GENOMIC DNA]</scope>
    <source>
        <strain>cv. Triton</strain>
    </source>
</reference>
<keyword id="KW-0007">Acetylation</keyword>
<keyword id="KW-0106">Calcium</keyword>
<keyword id="KW-0148">Chlorophyll</keyword>
<keyword id="KW-0150">Chloroplast</keyword>
<keyword id="KW-0157">Chromophore</keyword>
<keyword id="KW-0249">Electron transport</keyword>
<keyword id="KW-0359">Herbicide resistance</keyword>
<keyword id="KW-0408">Iron</keyword>
<keyword id="KW-0460">Magnesium</keyword>
<keyword id="KW-0464">Manganese</keyword>
<keyword id="KW-0472">Membrane</keyword>
<keyword id="KW-0479">Metal-binding</keyword>
<keyword id="KW-0560">Oxidoreductase</keyword>
<keyword id="KW-0597">Phosphoprotein</keyword>
<keyword id="KW-0602">Photosynthesis</keyword>
<keyword id="KW-0604">Photosystem II</keyword>
<keyword id="KW-0934">Plastid</keyword>
<keyword id="KW-0793">Thylakoid</keyword>
<keyword id="KW-0812">Transmembrane</keyword>
<keyword id="KW-1133">Transmembrane helix</keyword>
<keyword id="KW-0813">Transport</keyword>
<gene>
    <name evidence="2" type="primary">psbA</name>
</gene>
<evidence type="ECO:0000250" key="1">
    <source>
        <dbReference type="UniProtKB" id="P83755"/>
    </source>
</evidence>
<evidence type="ECO:0000255" key="2">
    <source>
        <dbReference type="HAMAP-Rule" id="MF_01379"/>
    </source>
</evidence>
<accession>P18290</accession>
<feature type="initiator methionine" description="Removed" evidence="1">
    <location>
        <position position="1"/>
    </location>
</feature>
<feature type="chain" id="PRO_0000090426" description="Photosystem II protein D1" evidence="2">
    <location>
        <begin position="2"/>
        <end position="344"/>
    </location>
</feature>
<feature type="propeptide" id="PRO_0000316440" evidence="2">
    <location>
        <begin position="345"/>
        <end position="353"/>
    </location>
</feature>
<feature type="transmembrane region" description="Helical" evidence="2">
    <location>
        <begin position="29"/>
        <end position="46"/>
    </location>
</feature>
<feature type="transmembrane region" description="Helical" evidence="2">
    <location>
        <begin position="118"/>
        <end position="133"/>
    </location>
</feature>
<feature type="transmembrane region" description="Helical" evidence="2">
    <location>
        <begin position="142"/>
        <end position="156"/>
    </location>
</feature>
<feature type="transmembrane region" description="Helical" evidence="2">
    <location>
        <begin position="197"/>
        <end position="218"/>
    </location>
</feature>
<feature type="transmembrane region" description="Helical" evidence="2">
    <location>
        <begin position="274"/>
        <end position="288"/>
    </location>
</feature>
<feature type="binding site" description="axial binding residue" evidence="2">
    <location>
        <position position="118"/>
    </location>
    <ligand>
        <name>chlorophyll a</name>
        <dbReference type="ChEBI" id="CHEBI:58416"/>
        <label>ChlzD1</label>
    </ligand>
    <ligandPart>
        <name>Mg</name>
        <dbReference type="ChEBI" id="CHEBI:25107"/>
    </ligandPart>
</feature>
<feature type="binding site" evidence="2">
    <location>
        <position position="126"/>
    </location>
    <ligand>
        <name>pheophytin a</name>
        <dbReference type="ChEBI" id="CHEBI:136840"/>
        <label>D1</label>
    </ligand>
</feature>
<feature type="binding site" evidence="2">
    <location>
        <position position="170"/>
    </location>
    <ligand>
        <name>[CaMn4O5] cluster</name>
        <dbReference type="ChEBI" id="CHEBI:189552"/>
    </ligand>
</feature>
<feature type="binding site" evidence="2">
    <location>
        <position position="189"/>
    </location>
    <ligand>
        <name>[CaMn4O5] cluster</name>
        <dbReference type="ChEBI" id="CHEBI:189552"/>
    </ligand>
</feature>
<feature type="binding site" description="axial binding residue" evidence="2">
    <location>
        <position position="198"/>
    </location>
    <ligand>
        <name>chlorophyll a</name>
        <dbReference type="ChEBI" id="CHEBI:58416"/>
        <label>PD1</label>
    </ligand>
    <ligandPart>
        <name>Mg</name>
        <dbReference type="ChEBI" id="CHEBI:25107"/>
    </ligandPart>
</feature>
<feature type="binding site" evidence="2">
    <location>
        <position position="215"/>
    </location>
    <ligand>
        <name>a quinone</name>
        <dbReference type="ChEBI" id="CHEBI:132124"/>
        <label>B</label>
    </ligand>
</feature>
<feature type="binding site" evidence="2">
    <location>
        <position position="215"/>
    </location>
    <ligand>
        <name>Fe cation</name>
        <dbReference type="ChEBI" id="CHEBI:24875"/>
        <note>ligand shared with heterodimeric partner</note>
    </ligand>
</feature>
<feature type="binding site" evidence="2">
    <location>
        <position position="272"/>
    </location>
    <ligand>
        <name>Fe cation</name>
        <dbReference type="ChEBI" id="CHEBI:24875"/>
        <note>ligand shared with heterodimeric partner</note>
    </ligand>
</feature>
<feature type="binding site" evidence="2">
    <location>
        <position position="332"/>
    </location>
    <ligand>
        <name>[CaMn4O5] cluster</name>
        <dbReference type="ChEBI" id="CHEBI:189552"/>
    </ligand>
</feature>
<feature type="binding site" evidence="2">
    <location>
        <position position="333"/>
    </location>
    <ligand>
        <name>[CaMn4O5] cluster</name>
        <dbReference type="ChEBI" id="CHEBI:189552"/>
    </ligand>
</feature>
<feature type="binding site" evidence="2">
    <location>
        <position position="342"/>
    </location>
    <ligand>
        <name>[CaMn4O5] cluster</name>
        <dbReference type="ChEBI" id="CHEBI:189552"/>
    </ligand>
</feature>
<feature type="binding site" evidence="2">
    <location>
        <position position="344"/>
    </location>
    <ligand>
        <name>[CaMn4O5] cluster</name>
        <dbReference type="ChEBI" id="CHEBI:189552"/>
    </ligand>
</feature>
<feature type="site" description="Tyrosine radical intermediate" evidence="2">
    <location>
        <position position="161"/>
    </location>
</feature>
<feature type="site" description="Stabilizes free radical intermediate" evidence="2">
    <location>
        <position position="190"/>
    </location>
</feature>
<feature type="site" description="Cleavage; by CTPA" evidence="2">
    <location>
        <begin position="344"/>
        <end position="345"/>
    </location>
</feature>
<feature type="modified residue" description="N-acetylthreonine" evidence="1 2">
    <location>
        <position position="2"/>
    </location>
</feature>
<feature type="modified residue" description="Phosphothreonine" evidence="1 2">
    <location>
        <position position="2"/>
    </location>
</feature>
<dbReference type="EC" id="1.10.3.9" evidence="2"/>
<dbReference type="EMBL" id="M36720">
    <property type="protein sequence ID" value="AAA84447.1"/>
    <property type="molecule type" value="Genomic_DNA"/>
</dbReference>
<dbReference type="SMR" id="P18290"/>
<dbReference type="GO" id="GO:0009535">
    <property type="term" value="C:chloroplast thylakoid membrane"/>
    <property type="evidence" value="ECO:0007669"/>
    <property type="project" value="UniProtKB-SubCell"/>
</dbReference>
<dbReference type="GO" id="GO:0009523">
    <property type="term" value="C:photosystem II"/>
    <property type="evidence" value="ECO:0007669"/>
    <property type="project" value="UniProtKB-KW"/>
</dbReference>
<dbReference type="GO" id="GO:0016168">
    <property type="term" value="F:chlorophyll binding"/>
    <property type="evidence" value="ECO:0007669"/>
    <property type="project" value="UniProtKB-UniRule"/>
</dbReference>
<dbReference type="GO" id="GO:0045156">
    <property type="term" value="F:electron transporter, transferring electrons within the cyclic electron transport pathway of photosynthesis activity"/>
    <property type="evidence" value="ECO:0007669"/>
    <property type="project" value="InterPro"/>
</dbReference>
<dbReference type="GO" id="GO:0005506">
    <property type="term" value="F:iron ion binding"/>
    <property type="evidence" value="ECO:0007669"/>
    <property type="project" value="UniProtKB-UniRule"/>
</dbReference>
<dbReference type="GO" id="GO:0016682">
    <property type="term" value="F:oxidoreductase activity, acting on diphenols and related substances as donors, oxygen as acceptor"/>
    <property type="evidence" value="ECO:0007669"/>
    <property type="project" value="UniProtKB-UniRule"/>
</dbReference>
<dbReference type="GO" id="GO:0010242">
    <property type="term" value="F:oxygen evolving activity"/>
    <property type="evidence" value="ECO:0007669"/>
    <property type="project" value="UniProtKB-EC"/>
</dbReference>
<dbReference type="GO" id="GO:0009772">
    <property type="term" value="P:photosynthetic electron transport in photosystem II"/>
    <property type="evidence" value="ECO:0007669"/>
    <property type="project" value="InterPro"/>
</dbReference>
<dbReference type="GO" id="GO:0009635">
    <property type="term" value="P:response to herbicide"/>
    <property type="evidence" value="ECO:0007669"/>
    <property type="project" value="UniProtKB-KW"/>
</dbReference>
<dbReference type="CDD" id="cd09289">
    <property type="entry name" value="Photosystem-II_D1"/>
    <property type="match status" value="1"/>
</dbReference>
<dbReference type="FunFam" id="1.20.85.10:FF:000002">
    <property type="entry name" value="Photosystem II protein D1"/>
    <property type="match status" value="1"/>
</dbReference>
<dbReference type="Gene3D" id="1.20.85.10">
    <property type="entry name" value="Photosystem II protein D1-like"/>
    <property type="match status" value="1"/>
</dbReference>
<dbReference type="HAMAP" id="MF_01379">
    <property type="entry name" value="PSII_PsbA_D1"/>
    <property type="match status" value="1"/>
</dbReference>
<dbReference type="InterPro" id="IPR055266">
    <property type="entry name" value="D1/D2"/>
</dbReference>
<dbReference type="InterPro" id="IPR036854">
    <property type="entry name" value="Photo_II_D1/D2_sf"/>
</dbReference>
<dbReference type="InterPro" id="IPR000484">
    <property type="entry name" value="Photo_RC_L/M"/>
</dbReference>
<dbReference type="InterPro" id="IPR055265">
    <property type="entry name" value="Photo_RC_L/M_CS"/>
</dbReference>
<dbReference type="InterPro" id="IPR005867">
    <property type="entry name" value="PSII_D1"/>
</dbReference>
<dbReference type="NCBIfam" id="TIGR01151">
    <property type="entry name" value="psbA"/>
    <property type="match status" value="1"/>
</dbReference>
<dbReference type="PANTHER" id="PTHR33149:SF12">
    <property type="entry name" value="PHOTOSYSTEM II D2 PROTEIN"/>
    <property type="match status" value="1"/>
</dbReference>
<dbReference type="PANTHER" id="PTHR33149">
    <property type="entry name" value="PHOTOSYSTEM II PROTEIN D1"/>
    <property type="match status" value="1"/>
</dbReference>
<dbReference type="Pfam" id="PF00124">
    <property type="entry name" value="Photo_RC"/>
    <property type="match status" value="1"/>
</dbReference>
<dbReference type="PRINTS" id="PR00256">
    <property type="entry name" value="REACTNCENTRE"/>
</dbReference>
<dbReference type="SUPFAM" id="SSF81483">
    <property type="entry name" value="Bacterial photosystem II reaction centre, L and M subunits"/>
    <property type="match status" value="1"/>
</dbReference>
<dbReference type="PROSITE" id="PS00244">
    <property type="entry name" value="REACTION_CENTER"/>
    <property type="match status" value="1"/>
</dbReference>
<name>PSBA_BRANA</name>
<sequence>MTAILERRESESLWGRFCNWITSTENRLYIGWFGVLMIPTLLTATSVFIIAFIAAPPVDIDGIREPVSGSLLYGNNIISGAIIPTSAAIGLHFYPIWEAASVDEWLYNGGPYELIVLHFLLGVACYMGREWELSFRLGMRPWIAVAYSAPVAAATAVFLIYPIGQGSFSDGMPLGISGTFNFMIVFQAEHNILMHPFHMLGVAGVFGGSLFSAMHGSLVTSSLIRETTENESANEGYRFGQEEETYNIVAAHGYFGRLIFQYAGFNNSRSLHFFLAAWPVVGIWFTALGISTMAFNLNGFNFNQSVVDSQGRVINTWADIINRANLGMEVMHERNAHNFPLDLAAVEAPSING</sequence>